<keyword id="KW-0028">Amino-acid biosynthesis</keyword>
<keyword id="KW-0055">Arginine biosynthesis</keyword>
<keyword id="KW-0067">ATP-binding</keyword>
<keyword id="KW-0963">Cytoplasm</keyword>
<keyword id="KW-0418">Kinase</keyword>
<keyword id="KW-0547">Nucleotide-binding</keyword>
<keyword id="KW-1185">Reference proteome</keyword>
<keyword id="KW-0808">Transferase</keyword>
<evidence type="ECO:0000255" key="1">
    <source>
        <dbReference type="HAMAP-Rule" id="MF_00082"/>
    </source>
</evidence>
<proteinExistence type="inferred from homology"/>
<dbReference type="EC" id="2.7.2.8" evidence="1"/>
<dbReference type="EMBL" id="CP000236">
    <property type="protein sequence ID" value="ABD45516.1"/>
    <property type="molecule type" value="Genomic_DNA"/>
</dbReference>
<dbReference type="RefSeq" id="WP_011452703.1">
    <property type="nucleotide sequence ID" value="NC_007799.1"/>
</dbReference>
<dbReference type="SMR" id="Q2GGM8"/>
<dbReference type="STRING" id="205920.ECH_0594"/>
<dbReference type="KEGG" id="ech:ECH_0594"/>
<dbReference type="eggNOG" id="COG0548">
    <property type="taxonomic scope" value="Bacteria"/>
</dbReference>
<dbReference type="HOGENOM" id="CLU_053680_0_0_5"/>
<dbReference type="OrthoDB" id="9803155at2"/>
<dbReference type="UniPathway" id="UPA00068">
    <property type="reaction ID" value="UER00107"/>
</dbReference>
<dbReference type="Proteomes" id="UP000008320">
    <property type="component" value="Chromosome"/>
</dbReference>
<dbReference type="GO" id="GO:0005737">
    <property type="term" value="C:cytoplasm"/>
    <property type="evidence" value="ECO:0007669"/>
    <property type="project" value="UniProtKB-SubCell"/>
</dbReference>
<dbReference type="GO" id="GO:0003991">
    <property type="term" value="F:acetylglutamate kinase activity"/>
    <property type="evidence" value="ECO:0007669"/>
    <property type="project" value="UniProtKB-UniRule"/>
</dbReference>
<dbReference type="GO" id="GO:0005524">
    <property type="term" value="F:ATP binding"/>
    <property type="evidence" value="ECO:0007669"/>
    <property type="project" value="UniProtKB-UniRule"/>
</dbReference>
<dbReference type="GO" id="GO:0004042">
    <property type="term" value="F:L-glutamate N-acetyltransferase activity"/>
    <property type="evidence" value="ECO:0007669"/>
    <property type="project" value="InterPro"/>
</dbReference>
<dbReference type="GO" id="GO:0042450">
    <property type="term" value="P:arginine biosynthetic process via ornithine"/>
    <property type="evidence" value="ECO:0007669"/>
    <property type="project" value="UniProtKB-UniRule"/>
</dbReference>
<dbReference type="GO" id="GO:0006526">
    <property type="term" value="P:L-arginine biosynthetic process"/>
    <property type="evidence" value="ECO:0007669"/>
    <property type="project" value="UniProtKB-UniPathway"/>
</dbReference>
<dbReference type="CDD" id="cd04250">
    <property type="entry name" value="AAK_NAGK-C"/>
    <property type="match status" value="1"/>
</dbReference>
<dbReference type="FunFam" id="3.40.1160.10:FF:000004">
    <property type="entry name" value="Acetylglutamate kinase"/>
    <property type="match status" value="1"/>
</dbReference>
<dbReference type="Gene3D" id="3.40.1160.10">
    <property type="entry name" value="Acetylglutamate kinase-like"/>
    <property type="match status" value="1"/>
</dbReference>
<dbReference type="HAMAP" id="MF_00082">
    <property type="entry name" value="ArgB"/>
    <property type="match status" value="1"/>
</dbReference>
<dbReference type="InterPro" id="IPR036393">
    <property type="entry name" value="AceGlu_kinase-like_sf"/>
</dbReference>
<dbReference type="InterPro" id="IPR004662">
    <property type="entry name" value="AcgluKinase_fam"/>
</dbReference>
<dbReference type="InterPro" id="IPR037528">
    <property type="entry name" value="ArgB"/>
</dbReference>
<dbReference type="InterPro" id="IPR001048">
    <property type="entry name" value="Asp/Glu/Uridylate_kinase"/>
</dbReference>
<dbReference type="InterPro" id="IPR041727">
    <property type="entry name" value="NAGK-C"/>
</dbReference>
<dbReference type="InterPro" id="IPR010167">
    <property type="entry name" value="NH2A_AcTrfase"/>
</dbReference>
<dbReference type="NCBIfam" id="TIGR00761">
    <property type="entry name" value="argB"/>
    <property type="match status" value="1"/>
</dbReference>
<dbReference type="PANTHER" id="PTHR23342">
    <property type="entry name" value="N-ACETYLGLUTAMATE SYNTHASE"/>
    <property type="match status" value="1"/>
</dbReference>
<dbReference type="PANTHER" id="PTHR23342:SF0">
    <property type="entry name" value="N-ACETYLGLUTAMATE SYNTHASE, MITOCHONDRIAL"/>
    <property type="match status" value="1"/>
</dbReference>
<dbReference type="Pfam" id="PF00696">
    <property type="entry name" value="AA_kinase"/>
    <property type="match status" value="1"/>
</dbReference>
<dbReference type="PIRSF" id="PIRSF000423">
    <property type="entry name" value="ArgA"/>
    <property type="match status" value="1"/>
</dbReference>
<dbReference type="SUPFAM" id="SSF53633">
    <property type="entry name" value="Carbamate kinase-like"/>
    <property type="match status" value="1"/>
</dbReference>
<feature type="chain" id="PRO_0000264703" description="Acetylglutamate kinase">
    <location>
        <begin position="1"/>
        <end position="321"/>
    </location>
</feature>
<feature type="binding site" evidence="1">
    <location>
        <begin position="88"/>
        <end position="89"/>
    </location>
    <ligand>
        <name>substrate</name>
    </ligand>
</feature>
<feature type="binding site" evidence="1">
    <location>
        <position position="110"/>
    </location>
    <ligand>
        <name>substrate</name>
    </ligand>
</feature>
<feature type="binding site" evidence="1">
    <location>
        <position position="216"/>
    </location>
    <ligand>
        <name>substrate</name>
    </ligand>
</feature>
<feature type="site" description="Transition state stabilizer" evidence="1">
    <location>
        <position position="53"/>
    </location>
</feature>
<feature type="site" description="Transition state stabilizer" evidence="1">
    <location>
        <position position="276"/>
    </location>
</feature>
<comment type="function">
    <text evidence="1">Catalyzes the ATP-dependent phosphorylation of N-acetyl-L-glutamate.</text>
</comment>
<comment type="catalytic activity">
    <reaction evidence="1">
        <text>N-acetyl-L-glutamate + ATP = N-acetyl-L-glutamyl 5-phosphate + ADP</text>
        <dbReference type="Rhea" id="RHEA:14629"/>
        <dbReference type="ChEBI" id="CHEBI:30616"/>
        <dbReference type="ChEBI" id="CHEBI:44337"/>
        <dbReference type="ChEBI" id="CHEBI:57936"/>
        <dbReference type="ChEBI" id="CHEBI:456216"/>
        <dbReference type="EC" id="2.7.2.8"/>
    </reaction>
</comment>
<comment type="pathway">
    <text evidence="1">Amino-acid biosynthesis; L-arginine biosynthesis; N(2)-acetyl-L-ornithine from L-glutamate: step 2/4.</text>
</comment>
<comment type="subcellular location">
    <subcellularLocation>
        <location evidence="1">Cytoplasm</location>
    </subcellularLocation>
</comment>
<comment type="similarity">
    <text evidence="1">Belongs to the acetylglutamate kinase family. ArgB subfamily.</text>
</comment>
<protein>
    <recommendedName>
        <fullName evidence="1">Acetylglutamate kinase</fullName>
        <ecNumber evidence="1">2.7.2.8</ecNumber>
    </recommendedName>
    <alternativeName>
        <fullName evidence="1">N-acetyl-L-glutamate 5-phosphotransferase</fullName>
    </alternativeName>
    <alternativeName>
        <fullName evidence="1">NAG kinase</fullName>
        <shortName evidence="1">NAGK</shortName>
    </alternativeName>
</protein>
<reference key="1">
    <citation type="journal article" date="2006" name="PLoS Genet.">
        <title>Comparative genomics of emerging human ehrlichiosis agents.</title>
        <authorList>
            <person name="Dunning Hotopp J.C."/>
            <person name="Lin M."/>
            <person name="Madupu R."/>
            <person name="Crabtree J."/>
            <person name="Angiuoli S.V."/>
            <person name="Eisen J.A."/>
            <person name="Seshadri R."/>
            <person name="Ren Q."/>
            <person name="Wu M."/>
            <person name="Utterback T.R."/>
            <person name="Smith S."/>
            <person name="Lewis M."/>
            <person name="Khouri H."/>
            <person name="Zhang C."/>
            <person name="Niu H."/>
            <person name="Lin Q."/>
            <person name="Ohashi N."/>
            <person name="Zhi N."/>
            <person name="Nelson W.C."/>
            <person name="Brinkac L.M."/>
            <person name="Dodson R.J."/>
            <person name="Rosovitz M.J."/>
            <person name="Sundaram J.P."/>
            <person name="Daugherty S.C."/>
            <person name="Davidsen T."/>
            <person name="Durkin A.S."/>
            <person name="Gwinn M.L."/>
            <person name="Haft D.H."/>
            <person name="Selengut J.D."/>
            <person name="Sullivan S.A."/>
            <person name="Zafar N."/>
            <person name="Zhou L."/>
            <person name="Benahmed F."/>
            <person name="Forberger H."/>
            <person name="Halpin R."/>
            <person name="Mulligan S."/>
            <person name="Robinson J."/>
            <person name="White O."/>
            <person name="Rikihisa Y."/>
            <person name="Tettelin H."/>
        </authorList>
    </citation>
    <scope>NUCLEOTIDE SEQUENCE [LARGE SCALE GENOMIC DNA]</scope>
    <source>
        <strain>ATCC CRL-10679 / Arkansas</strain>
    </source>
</reference>
<organism>
    <name type="scientific">Ehrlichia chaffeensis (strain ATCC CRL-10679 / Arkansas)</name>
    <dbReference type="NCBI Taxonomy" id="205920"/>
    <lineage>
        <taxon>Bacteria</taxon>
        <taxon>Pseudomonadati</taxon>
        <taxon>Pseudomonadota</taxon>
        <taxon>Alphaproteobacteria</taxon>
        <taxon>Rickettsiales</taxon>
        <taxon>Anaplasmataceae</taxon>
        <taxon>Ehrlichia</taxon>
    </lineage>
</organism>
<gene>
    <name evidence="1" type="primary">argB</name>
    <name type="ordered locus">ECH_0594</name>
</gene>
<sequence>MKLHNVLKNNNKEDVVSNIEQFGGNADWFNAARVLSESLPYIQQFSGETFIIKYGGAAMKDRKLAENFAHDIVLLKQLGINPIVVHGGGSKINEFLEKINKKSTFVNGLRVTDAETLEIVEMVLCGLVNKDITQLINKAGGNAIGLCGKDANLIEAKKVCYTYKENQSNNVEKILDMGFVGEPHEVNTDLLFFMEESDFIPVIAPVCSGENDLTYNVNADLVAGALANALAAAKLIILTNVPGVTDVNGNLLSEISVSNAESLIEQGIANAGMIPKLQTCIKVVKEGYGSAHIIDGRIPHVLLLELFTIHGTGTMVLNTDI</sequence>
<name>ARGB_EHRCR</name>
<accession>Q2GGM8</accession>